<keyword id="KW-1185">Reference proteome</keyword>
<keyword id="KW-0804">Transcription</keyword>
<keyword id="KW-0805">Transcription regulation</keyword>
<feature type="chain" id="PRO_0000089635" description="Putative cation transport regulator ChaB">
    <location>
        <begin position="1"/>
        <end position="76"/>
    </location>
</feature>
<reference key="1">
    <citation type="journal article" date="2002" name="Nucleic Acids Res.">
        <title>Genome sequence of Shigella flexneri 2a: insights into pathogenicity through comparison with genomes of Escherichia coli K12 and O157.</title>
        <authorList>
            <person name="Jin Q."/>
            <person name="Yuan Z."/>
            <person name="Xu J."/>
            <person name="Wang Y."/>
            <person name="Shen Y."/>
            <person name="Lu W."/>
            <person name="Wang J."/>
            <person name="Liu H."/>
            <person name="Yang J."/>
            <person name="Yang F."/>
            <person name="Zhang X."/>
            <person name="Zhang J."/>
            <person name="Yang G."/>
            <person name="Wu H."/>
            <person name="Qu D."/>
            <person name="Dong J."/>
            <person name="Sun L."/>
            <person name="Xue Y."/>
            <person name="Zhao A."/>
            <person name="Gao Y."/>
            <person name="Zhu J."/>
            <person name="Kan B."/>
            <person name="Ding K."/>
            <person name="Chen S."/>
            <person name="Cheng H."/>
            <person name="Yao Z."/>
            <person name="He B."/>
            <person name="Chen R."/>
            <person name="Ma D."/>
            <person name="Qiang B."/>
            <person name="Wen Y."/>
            <person name="Hou Y."/>
            <person name="Yu J."/>
        </authorList>
    </citation>
    <scope>NUCLEOTIDE SEQUENCE [LARGE SCALE GENOMIC DNA]</scope>
    <source>
        <strain>301 / Serotype 2a</strain>
    </source>
</reference>
<reference key="2">
    <citation type="journal article" date="2003" name="Infect. Immun.">
        <title>Complete genome sequence and comparative genomics of Shigella flexneri serotype 2a strain 2457T.</title>
        <authorList>
            <person name="Wei J."/>
            <person name="Goldberg M.B."/>
            <person name="Burland V."/>
            <person name="Venkatesan M.M."/>
            <person name="Deng W."/>
            <person name="Fournier G."/>
            <person name="Mayhew G.F."/>
            <person name="Plunkett G. III"/>
            <person name="Rose D.J."/>
            <person name="Darling A."/>
            <person name="Mau B."/>
            <person name="Perna N.T."/>
            <person name="Payne S.M."/>
            <person name="Runyen-Janecky L.J."/>
            <person name="Zhou S."/>
            <person name="Schwartz D.C."/>
            <person name="Blattner F.R."/>
        </authorList>
    </citation>
    <scope>NUCLEOTIDE SEQUENCE [LARGE SCALE GENOMIC DNA]</scope>
    <source>
        <strain>ATCC 700930 / 2457T / Serotype 2a</strain>
    </source>
</reference>
<accession>P0AE66</accession>
<accession>P39162</accession>
<organism>
    <name type="scientific">Shigella flexneri</name>
    <dbReference type="NCBI Taxonomy" id="623"/>
    <lineage>
        <taxon>Bacteria</taxon>
        <taxon>Pseudomonadati</taxon>
        <taxon>Pseudomonadota</taxon>
        <taxon>Gammaproteobacteria</taxon>
        <taxon>Enterobacterales</taxon>
        <taxon>Enterobacteriaceae</taxon>
        <taxon>Shigella</taxon>
    </lineage>
</organism>
<protein>
    <recommendedName>
        <fullName>Putative cation transport regulator ChaB</fullName>
    </recommendedName>
</protein>
<gene>
    <name type="primary">chaB</name>
    <name type="ordered locus">SF1220</name>
    <name type="ordered locus">S1304</name>
</gene>
<evidence type="ECO:0000250" key="1">
    <source>
        <dbReference type="UniProtKB" id="P0AE65"/>
    </source>
</evidence>
<evidence type="ECO:0000305" key="2"/>
<dbReference type="EMBL" id="AE005674">
    <property type="protein sequence ID" value="AAN42833.1"/>
    <property type="molecule type" value="Genomic_DNA"/>
</dbReference>
<dbReference type="EMBL" id="AE014073">
    <property type="protein sequence ID" value="AAP16719.1"/>
    <property type="molecule type" value="Genomic_DNA"/>
</dbReference>
<dbReference type="RefSeq" id="NP_707126.1">
    <property type="nucleotide sequence ID" value="NC_004337.2"/>
</dbReference>
<dbReference type="RefSeq" id="WP_001146444.1">
    <property type="nucleotide sequence ID" value="NZ_WPGW01000029.1"/>
</dbReference>
<dbReference type="BMRB" id="P0AE66"/>
<dbReference type="SMR" id="P0AE66"/>
<dbReference type="STRING" id="198214.SF1220"/>
<dbReference type="PaxDb" id="198214-SF1220"/>
<dbReference type="GeneID" id="1024189"/>
<dbReference type="GeneID" id="93775285"/>
<dbReference type="KEGG" id="sfl:SF1220"/>
<dbReference type="KEGG" id="sfx:S1304"/>
<dbReference type="PATRIC" id="fig|198214.7.peg.1438"/>
<dbReference type="HOGENOM" id="CLU_179907_0_0_6"/>
<dbReference type="Proteomes" id="UP000001006">
    <property type="component" value="Chromosome"/>
</dbReference>
<dbReference type="Proteomes" id="UP000002673">
    <property type="component" value="Chromosome"/>
</dbReference>
<dbReference type="Gene3D" id="1.10.1740.70">
    <property type="entry name" value="ChaB"/>
    <property type="match status" value="1"/>
</dbReference>
<dbReference type="InterPro" id="IPR009317">
    <property type="entry name" value="ChaB"/>
</dbReference>
<dbReference type="InterPro" id="IPR037205">
    <property type="entry name" value="ChaB_sf"/>
</dbReference>
<dbReference type="NCBIfam" id="NF007136">
    <property type="entry name" value="PRK09582.1"/>
    <property type="match status" value="1"/>
</dbReference>
<dbReference type="Pfam" id="PF06150">
    <property type="entry name" value="ChaB"/>
    <property type="match status" value="1"/>
</dbReference>
<dbReference type="SUPFAM" id="SSF140376">
    <property type="entry name" value="ChaB-like"/>
    <property type="match status" value="1"/>
</dbReference>
<sequence>MPYKTKSDLPESVKHVLPSHAQDIYKEAFNSAWDQYKDKEDRRDDASREETAHKVAWAAVKHEYAKGDDDKWHKKS</sequence>
<comment type="function">
    <text evidence="1">Might be a regulator of the sodium-potassium/proton antiporter ChaA.</text>
</comment>
<comment type="subunit">
    <text evidence="1">Monomer.</text>
</comment>
<comment type="similarity">
    <text evidence="2">Belongs to the ChaB family.</text>
</comment>
<proteinExistence type="inferred from homology"/>
<name>CHAB_SHIFL</name>